<proteinExistence type="evidence at transcript level"/>
<sequence length="250" mass="27044">MSRRYDSRTTIFSPEGRLYQVEYAMEAIGNAGSALGVLAADGVVLVGEKKVTSKLLQTSRSAEKMYKIDSHLACAVAGIMSDANILLNTARLHAQRYALSYQEPIPVEQLVQSLCDTKQGYTQFGGLRPFGVSFLFAGWDKHHGFQLYMSDPSGNYSGWKAAAVGANSQAAQSMLKQDYRDGMTREEAVALALKVLSKTMDSTSLTAEKLELAEVFLQPGTGEVQYQVCSPEAMGKLLAKAGLSQPAPEA</sequence>
<organism>
    <name type="scientific">Oryza sativa subsp. japonica</name>
    <name type="common">Rice</name>
    <dbReference type="NCBI Taxonomy" id="39947"/>
    <lineage>
        <taxon>Eukaryota</taxon>
        <taxon>Viridiplantae</taxon>
        <taxon>Streptophyta</taxon>
        <taxon>Embryophyta</taxon>
        <taxon>Tracheophyta</taxon>
        <taxon>Spermatophyta</taxon>
        <taxon>Magnoliopsida</taxon>
        <taxon>Liliopsida</taxon>
        <taxon>Poales</taxon>
        <taxon>Poaceae</taxon>
        <taxon>BOP clade</taxon>
        <taxon>Oryzoideae</taxon>
        <taxon>Oryzeae</taxon>
        <taxon>Oryzinae</taxon>
        <taxon>Oryza</taxon>
        <taxon>Oryza sativa</taxon>
    </lineage>
</organism>
<gene>
    <name type="primary">PAC1A</name>
    <name type="ordered locus">Os06g0176000</name>
    <name type="ordered locus">LOC_Os06g07878</name>
    <name type="ORF">OsJ_019497</name>
    <name type="ORF">P0015E04.21</name>
</gene>
<keyword id="KW-0963">Cytoplasm</keyword>
<keyword id="KW-0539">Nucleus</keyword>
<keyword id="KW-0647">Proteasome</keyword>
<keyword id="KW-1185">Reference proteome</keyword>
<reference key="1">
    <citation type="journal article" date="2000" name="Gene">
        <title>Primary structural features of the 20S proteasome subunits of rice (Oryza sativa).</title>
        <authorList>
            <person name="Sassa H."/>
            <person name="Oguchi S."/>
            <person name="Inoue T."/>
            <person name="Hirano H."/>
        </authorList>
    </citation>
    <scope>NUCLEOTIDE SEQUENCE [MRNA]</scope>
    <source>
        <strain>cv. Nipponbare</strain>
    </source>
</reference>
<reference key="2">
    <citation type="journal article" date="2005" name="Nature">
        <title>The map-based sequence of the rice genome.</title>
        <authorList>
            <consortium name="International rice genome sequencing project (IRGSP)"/>
        </authorList>
    </citation>
    <scope>NUCLEOTIDE SEQUENCE [LARGE SCALE GENOMIC DNA]</scope>
    <source>
        <strain>cv. Nipponbare</strain>
    </source>
</reference>
<reference key="3">
    <citation type="journal article" date="2008" name="Nucleic Acids Res.">
        <title>The rice annotation project database (RAP-DB): 2008 update.</title>
        <authorList>
            <consortium name="The rice annotation project (RAP)"/>
        </authorList>
    </citation>
    <scope>GENOME REANNOTATION</scope>
    <source>
        <strain>cv. Nipponbare</strain>
    </source>
</reference>
<reference key="4">
    <citation type="journal article" date="2013" name="Rice">
        <title>Improvement of the Oryza sativa Nipponbare reference genome using next generation sequence and optical map data.</title>
        <authorList>
            <person name="Kawahara Y."/>
            <person name="de la Bastide M."/>
            <person name="Hamilton J.P."/>
            <person name="Kanamori H."/>
            <person name="McCombie W.R."/>
            <person name="Ouyang S."/>
            <person name="Schwartz D.C."/>
            <person name="Tanaka T."/>
            <person name="Wu J."/>
            <person name="Zhou S."/>
            <person name="Childs K.L."/>
            <person name="Davidson R.M."/>
            <person name="Lin H."/>
            <person name="Quesada-Ocampo L."/>
            <person name="Vaillancourt B."/>
            <person name="Sakai H."/>
            <person name="Lee S.S."/>
            <person name="Kim J."/>
            <person name="Numa H."/>
            <person name="Itoh T."/>
            <person name="Buell C.R."/>
            <person name="Matsumoto T."/>
        </authorList>
    </citation>
    <scope>GENOME REANNOTATION</scope>
    <source>
        <strain>cv. Nipponbare</strain>
    </source>
</reference>
<reference key="5">
    <citation type="journal article" date="2005" name="PLoS Biol.">
        <title>The genomes of Oryza sativa: a history of duplications.</title>
        <authorList>
            <person name="Yu J."/>
            <person name="Wang J."/>
            <person name="Lin W."/>
            <person name="Li S."/>
            <person name="Li H."/>
            <person name="Zhou J."/>
            <person name="Ni P."/>
            <person name="Dong W."/>
            <person name="Hu S."/>
            <person name="Zeng C."/>
            <person name="Zhang J."/>
            <person name="Zhang Y."/>
            <person name="Li R."/>
            <person name="Xu Z."/>
            <person name="Li S."/>
            <person name="Li X."/>
            <person name="Zheng H."/>
            <person name="Cong L."/>
            <person name="Lin L."/>
            <person name="Yin J."/>
            <person name="Geng J."/>
            <person name="Li G."/>
            <person name="Shi J."/>
            <person name="Liu J."/>
            <person name="Lv H."/>
            <person name="Li J."/>
            <person name="Wang J."/>
            <person name="Deng Y."/>
            <person name="Ran L."/>
            <person name="Shi X."/>
            <person name="Wang X."/>
            <person name="Wu Q."/>
            <person name="Li C."/>
            <person name="Ren X."/>
            <person name="Wang J."/>
            <person name="Wang X."/>
            <person name="Li D."/>
            <person name="Liu D."/>
            <person name="Zhang X."/>
            <person name="Ji Z."/>
            <person name="Zhao W."/>
            <person name="Sun Y."/>
            <person name="Zhang Z."/>
            <person name="Bao J."/>
            <person name="Han Y."/>
            <person name="Dong L."/>
            <person name="Ji J."/>
            <person name="Chen P."/>
            <person name="Wu S."/>
            <person name="Liu J."/>
            <person name="Xiao Y."/>
            <person name="Bu D."/>
            <person name="Tan J."/>
            <person name="Yang L."/>
            <person name="Ye C."/>
            <person name="Zhang J."/>
            <person name="Xu J."/>
            <person name="Zhou Y."/>
            <person name="Yu Y."/>
            <person name="Zhang B."/>
            <person name="Zhuang S."/>
            <person name="Wei H."/>
            <person name="Liu B."/>
            <person name="Lei M."/>
            <person name="Yu H."/>
            <person name="Li Y."/>
            <person name="Xu H."/>
            <person name="Wei S."/>
            <person name="He X."/>
            <person name="Fang L."/>
            <person name="Zhang Z."/>
            <person name="Zhang Y."/>
            <person name="Huang X."/>
            <person name="Su Z."/>
            <person name="Tong W."/>
            <person name="Li J."/>
            <person name="Tong Z."/>
            <person name="Li S."/>
            <person name="Ye J."/>
            <person name="Wang L."/>
            <person name="Fang L."/>
            <person name="Lei T."/>
            <person name="Chen C.-S."/>
            <person name="Chen H.-C."/>
            <person name="Xu Z."/>
            <person name="Li H."/>
            <person name="Huang H."/>
            <person name="Zhang F."/>
            <person name="Xu H."/>
            <person name="Li N."/>
            <person name="Zhao C."/>
            <person name="Li S."/>
            <person name="Dong L."/>
            <person name="Huang Y."/>
            <person name="Li L."/>
            <person name="Xi Y."/>
            <person name="Qi Q."/>
            <person name="Li W."/>
            <person name="Zhang B."/>
            <person name="Hu W."/>
            <person name="Zhang Y."/>
            <person name="Tian X."/>
            <person name="Jiao Y."/>
            <person name="Liang X."/>
            <person name="Jin J."/>
            <person name="Gao L."/>
            <person name="Zheng W."/>
            <person name="Hao B."/>
            <person name="Liu S.-M."/>
            <person name="Wang W."/>
            <person name="Yuan L."/>
            <person name="Cao M."/>
            <person name="McDermott J."/>
            <person name="Samudrala R."/>
            <person name="Wang J."/>
            <person name="Wong G.K.-S."/>
            <person name="Yang H."/>
        </authorList>
    </citation>
    <scope>NUCLEOTIDE SEQUENCE [LARGE SCALE GENOMIC DNA]</scope>
    <source>
        <strain>cv. Nipponbare</strain>
    </source>
</reference>
<feature type="chain" id="PRO_0000124112" description="Proteasome subunit alpha type-4-1">
    <location>
        <begin position="1"/>
        <end position="250"/>
    </location>
</feature>
<name>PSA4A_ORYSJ</name>
<comment type="function">
    <text>The proteasome is a multicatalytic proteinase complex which is characterized by its ability to cleave peptides with Arg, Phe, Tyr, Leu, and Glu adjacent to the leaving group at neutral or slightly basic pH. The proteasome has an ATP-dependent proteolytic activity.</text>
</comment>
<comment type="subunit">
    <text evidence="1">The 26S proteasome consists of a 20S proteasome core and two 19S regulatory subunits. The 20S proteasome core is composed of 28 subunits that are arranged in four stacked rings, resulting in a barrel-shaped structure. The two end rings are each formed by seven alpha subunits, and the two central rings are each formed by seven beta subunits. The catalytic chamber with the active sites is on the inside of the barrel (By similarity).</text>
</comment>
<comment type="subcellular location">
    <subcellularLocation>
        <location evidence="1">Cytoplasm</location>
    </subcellularLocation>
    <subcellularLocation>
        <location evidence="1">Nucleus</location>
    </subcellularLocation>
</comment>
<comment type="similarity">
    <text evidence="2">Belongs to the peptidase T1A family.</text>
</comment>
<protein>
    <recommendedName>
        <fullName>Proteasome subunit alpha type-4-1</fullName>
    </recommendedName>
    <alternativeName>
        <fullName>20S proteasome alpha subunit C</fullName>
    </alternativeName>
    <alternativeName>
        <fullName>20S proteasome subunit alpha-3</fullName>
    </alternativeName>
</protein>
<evidence type="ECO:0000250" key="1"/>
<evidence type="ECO:0000255" key="2">
    <source>
        <dbReference type="PROSITE-ProRule" id="PRU00808"/>
    </source>
</evidence>
<dbReference type="EMBL" id="AB026560">
    <property type="protein sequence ID" value="BAA96831.1"/>
    <property type="molecule type" value="mRNA"/>
</dbReference>
<dbReference type="EMBL" id="AP002069">
    <property type="protein sequence ID" value="BAA95822.1"/>
    <property type="molecule type" value="Genomic_DNA"/>
</dbReference>
<dbReference type="EMBL" id="AP008212">
    <property type="protein sequence ID" value="BAF18867.1"/>
    <property type="molecule type" value="Genomic_DNA"/>
</dbReference>
<dbReference type="EMBL" id="AP014962">
    <property type="protein sequence ID" value="BAS96413.1"/>
    <property type="molecule type" value="Genomic_DNA"/>
</dbReference>
<dbReference type="EMBL" id="CM000143">
    <property type="protein sequence ID" value="EAZ36014.1"/>
    <property type="molecule type" value="Genomic_DNA"/>
</dbReference>
<dbReference type="RefSeq" id="XP_015643487.1">
    <property type="nucleotide sequence ID" value="XM_015788001.1"/>
</dbReference>
<dbReference type="RefSeq" id="XP_015643524.1">
    <property type="nucleotide sequence ID" value="XM_015788038.1"/>
</dbReference>
<dbReference type="SMR" id="P0DKK3"/>
<dbReference type="FunCoup" id="P0DKK3">
    <property type="interactions" value="3266"/>
</dbReference>
<dbReference type="STRING" id="39947.P0DKK3"/>
<dbReference type="PaxDb" id="39947-P0DKK3"/>
<dbReference type="EnsemblPlants" id="Os06t0176000-01">
    <property type="protein sequence ID" value="Os06t0176000-01"/>
    <property type="gene ID" value="Os06g0176000"/>
</dbReference>
<dbReference type="EnsemblPlants" id="Os06t0177100-01">
    <property type="protein sequence ID" value="Os06t0177100-01"/>
    <property type="gene ID" value="Os06g0177100"/>
</dbReference>
<dbReference type="Gramene" id="Os06t0176000-01">
    <property type="protein sequence ID" value="Os06t0176000-01"/>
    <property type="gene ID" value="Os06g0176000"/>
</dbReference>
<dbReference type="Gramene" id="Os06t0177100-01">
    <property type="protein sequence ID" value="Os06t0177100-01"/>
    <property type="gene ID" value="Os06g0177100"/>
</dbReference>
<dbReference type="KEGG" id="dosa:Os06g0176000"/>
<dbReference type="eggNOG" id="KOG0178">
    <property type="taxonomic scope" value="Eukaryota"/>
</dbReference>
<dbReference type="InParanoid" id="P0DKK3"/>
<dbReference type="OMA" id="YVLNDNM"/>
<dbReference type="OrthoDB" id="431557at2759"/>
<dbReference type="Proteomes" id="UP000000763">
    <property type="component" value="Chromosome 6"/>
</dbReference>
<dbReference type="Proteomes" id="UP000007752">
    <property type="component" value="Chromosome 6"/>
</dbReference>
<dbReference type="Proteomes" id="UP000059680">
    <property type="component" value="Chromosome 6"/>
</dbReference>
<dbReference type="ExpressionAtlas" id="P0DKK3">
    <property type="expression patterns" value="baseline"/>
</dbReference>
<dbReference type="GO" id="GO:0005829">
    <property type="term" value="C:cytosol"/>
    <property type="evidence" value="ECO:0000318"/>
    <property type="project" value="GO_Central"/>
</dbReference>
<dbReference type="GO" id="GO:0005634">
    <property type="term" value="C:nucleus"/>
    <property type="evidence" value="ECO:0000318"/>
    <property type="project" value="GO_Central"/>
</dbReference>
<dbReference type="GO" id="GO:0019773">
    <property type="term" value="C:proteasome core complex, alpha-subunit complex"/>
    <property type="evidence" value="ECO:0000318"/>
    <property type="project" value="GO_Central"/>
</dbReference>
<dbReference type="GO" id="GO:0043161">
    <property type="term" value="P:proteasome-mediated ubiquitin-dependent protein catabolic process"/>
    <property type="evidence" value="ECO:0000318"/>
    <property type="project" value="GO_Central"/>
</dbReference>
<dbReference type="CDD" id="cd03752">
    <property type="entry name" value="proteasome_alpha_type_4"/>
    <property type="match status" value="1"/>
</dbReference>
<dbReference type="FunFam" id="3.60.20.10:FF:000031">
    <property type="entry name" value="Proteasome subunit alpha type"/>
    <property type="match status" value="1"/>
</dbReference>
<dbReference type="Gene3D" id="3.60.20.10">
    <property type="entry name" value="Glutamine Phosphoribosylpyrophosphate, subunit 1, domain 1"/>
    <property type="match status" value="1"/>
</dbReference>
<dbReference type="InterPro" id="IPR029055">
    <property type="entry name" value="Ntn_hydrolases_N"/>
</dbReference>
<dbReference type="InterPro" id="IPR050115">
    <property type="entry name" value="Proteasome_alpha"/>
</dbReference>
<dbReference type="InterPro" id="IPR023332">
    <property type="entry name" value="Proteasome_alpha-type"/>
</dbReference>
<dbReference type="InterPro" id="IPR000426">
    <property type="entry name" value="Proteasome_asu_N"/>
</dbReference>
<dbReference type="InterPro" id="IPR001353">
    <property type="entry name" value="Proteasome_sua/b"/>
</dbReference>
<dbReference type="NCBIfam" id="NF003075">
    <property type="entry name" value="PRK03996.1"/>
    <property type="match status" value="1"/>
</dbReference>
<dbReference type="PANTHER" id="PTHR11599">
    <property type="entry name" value="PROTEASOME SUBUNIT ALPHA/BETA"/>
    <property type="match status" value="1"/>
</dbReference>
<dbReference type="Pfam" id="PF00227">
    <property type="entry name" value="Proteasome"/>
    <property type="match status" value="1"/>
</dbReference>
<dbReference type="Pfam" id="PF10584">
    <property type="entry name" value="Proteasome_A_N"/>
    <property type="match status" value="1"/>
</dbReference>
<dbReference type="SMART" id="SM00948">
    <property type="entry name" value="Proteasome_A_N"/>
    <property type="match status" value="1"/>
</dbReference>
<dbReference type="SUPFAM" id="SSF56235">
    <property type="entry name" value="N-terminal nucleophile aminohydrolases (Ntn hydrolases)"/>
    <property type="match status" value="1"/>
</dbReference>
<dbReference type="PROSITE" id="PS00388">
    <property type="entry name" value="PROTEASOME_ALPHA_1"/>
    <property type="match status" value="1"/>
</dbReference>
<dbReference type="PROSITE" id="PS51475">
    <property type="entry name" value="PROTEASOME_ALPHA_2"/>
    <property type="match status" value="1"/>
</dbReference>
<accession>P0DKK3</accession>
<accession>A0A0P0WT26</accession>
<accession>P0C1G8</accession>
<accession>Q0DE56</accession>
<accession>Q9LE92</accession>
<accession>Q9XIZ9</accession>